<keyword id="KW-0687">Ribonucleoprotein</keyword>
<keyword id="KW-0689">Ribosomal protein</keyword>
<keyword id="KW-0694">RNA-binding</keyword>
<keyword id="KW-0699">rRNA-binding</keyword>
<proteinExistence type="inferred from homology"/>
<organism>
    <name type="scientific">Rhodococcus erythropolis (strain PR4 / NBRC 100887)</name>
    <dbReference type="NCBI Taxonomy" id="234621"/>
    <lineage>
        <taxon>Bacteria</taxon>
        <taxon>Bacillati</taxon>
        <taxon>Actinomycetota</taxon>
        <taxon>Actinomycetes</taxon>
        <taxon>Mycobacteriales</taxon>
        <taxon>Nocardiaceae</taxon>
        <taxon>Rhodococcus</taxon>
        <taxon>Rhodococcus erythropolis group</taxon>
    </lineage>
</organism>
<feature type="chain" id="PRO_1000211816" description="Small ribosomal subunit protein uS19">
    <location>
        <begin position="1"/>
        <end position="93"/>
    </location>
</feature>
<reference key="1">
    <citation type="submission" date="2005-03" db="EMBL/GenBank/DDBJ databases">
        <title>Comparison of the complete genome sequences of Rhodococcus erythropolis PR4 and Rhodococcus opacus B4.</title>
        <authorList>
            <person name="Takarada H."/>
            <person name="Sekine M."/>
            <person name="Hosoyama A."/>
            <person name="Yamada R."/>
            <person name="Fujisawa T."/>
            <person name="Omata S."/>
            <person name="Shimizu A."/>
            <person name="Tsukatani N."/>
            <person name="Tanikawa S."/>
            <person name="Fujita N."/>
            <person name="Harayama S."/>
        </authorList>
    </citation>
    <scope>NUCLEOTIDE SEQUENCE [LARGE SCALE GENOMIC DNA]</scope>
    <source>
        <strain>PR4 / NBRC 100887</strain>
    </source>
</reference>
<gene>
    <name evidence="1" type="primary">rpsS</name>
    <name type="ordered locus">RER_18560</name>
</gene>
<sequence length="93" mass="10631">MPRSLKKGPFVDDHLLAKVDVQNEKGTKQVIKTWSRRSTIIPDFIGHTFAVHDGRKHVPVFVSDSMVGHKLGEFAPTRTFKGHIKDDRKAKRR</sequence>
<comment type="function">
    <text evidence="1">Protein S19 forms a complex with S13 that binds strongly to the 16S ribosomal RNA.</text>
</comment>
<comment type="similarity">
    <text evidence="1">Belongs to the universal ribosomal protein uS19 family.</text>
</comment>
<dbReference type="EMBL" id="AP008957">
    <property type="protein sequence ID" value="BAH32564.1"/>
    <property type="molecule type" value="Genomic_DNA"/>
</dbReference>
<dbReference type="RefSeq" id="WP_003940820.1">
    <property type="nucleotide sequence ID" value="NC_012490.1"/>
</dbReference>
<dbReference type="SMR" id="C0ZW29"/>
<dbReference type="GeneID" id="93803300"/>
<dbReference type="KEGG" id="rer:RER_18560"/>
<dbReference type="eggNOG" id="COG0185">
    <property type="taxonomic scope" value="Bacteria"/>
</dbReference>
<dbReference type="HOGENOM" id="CLU_144911_0_1_11"/>
<dbReference type="Proteomes" id="UP000002204">
    <property type="component" value="Chromosome"/>
</dbReference>
<dbReference type="GO" id="GO:0005737">
    <property type="term" value="C:cytoplasm"/>
    <property type="evidence" value="ECO:0007669"/>
    <property type="project" value="UniProtKB-ARBA"/>
</dbReference>
<dbReference type="GO" id="GO:0015935">
    <property type="term" value="C:small ribosomal subunit"/>
    <property type="evidence" value="ECO:0007669"/>
    <property type="project" value="InterPro"/>
</dbReference>
<dbReference type="GO" id="GO:0019843">
    <property type="term" value="F:rRNA binding"/>
    <property type="evidence" value="ECO:0007669"/>
    <property type="project" value="UniProtKB-UniRule"/>
</dbReference>
<dbReference type="GO" id="GO:0003735">
    <property type="term" value="F:structural constituent of ribosome"/>
    <property type="evidence" value="ECO:0007669"/>
    <property type="project" value="InterPro"/>
</dbReference>
<dbReference type="GO" id="GO:0000028">
    <property type="term" value="P:ribosomal small subunit assembly"/>
    <property type="evidence" value="ECO:0007669"/>
    <property type="project" value="TreeGrafter"/>
</dbReference>
<dbReference type="GO" id="GO:0006412">
    <property type="term" value="P:translation"/>
    <property type="evidence" value="ECO:0007669"/>
    <property type="project" value="UniProtKB-UniRule"/>
</dbReference>
<dbReference type="FunFam" id="3.30.860.10:FF:000001">
    <property type="entry name" value="30S ribosomal protein S19"/>
    <property type="match status" value="1"/>
</dbReference>
<dbReference type="Gene3D" id="3.30.860.10">
    <property type="entry name" value="30s Ribosomal Protein S19, Chain A"/>
    <property type="match status" value="1"/>
</dbReference>
<dbReference type="HAMAP" id="MF_00531">
    <property type="entry name" value="Ribosomal_uS19"/>
    <property type="match status" value="1"/>
</dbReference>
<dbReference type="InterPro" id="IPR002222">
    <property type="entry name" value="Ribosomal_uS19"/>
</dbReference>
<dbReference type="InterPro" id="IPR005732">
    <property type="entry name" value="Ribosomal_uS19_bac-type"/>
</dbReference>
<dbReference type="InterPro" id="IPR020934">
    <property type="entry name" value="Ribosomal_uS19_CS"/>
</dbReference>
<dbReference type="InterPro" id="IPR023575">
    <property type="entry name" value="Ribosomal_uS19_SF"/>
</dbReference>
<dbReference type="NCBIfam" id="TIGR01050">
    <property type="entry name" value="rpsS_bact"/>
    <property type="match status" value="1"/>
</dbReference>
<dbReference type="PANTHER" id="PTHR11880">
    <property type="entry name" value="RIBOSOMAL PROTEIN S19P FAMILY MEMBER"/>
    <property type="match status" value="1"/>
</dbReference>
<dbReference type="PANTHER" id="PTHR11880:SF8">
    <property type="entry name" value="SMALL RIBOSOMAL SUBUNIT PROTEIN US19M"/>
    <property type="match status" value="1"/>
</dbReference>
<dbReference type="Pfam" id="PF00203">
    <property type="entry name" value="Ribosomal_S19"/>
    <property type="match status" value="1"/>
</dbReference>
<dbReference type="PIRSF" id="PIRSF002144">
    <property type="entry name" value="Ribosomal_S19"/>
    <property type="match status" value="1"/>
</dbReference>
<dbReference type="PRINTS" id="PR00975">
    <property type="entry name" value="RIBOSOMALS19"/>
</dbReference>
<dbReference type="SUPFAM" id="SSF54570">
    <property type="entry name" value="Ribosomal protein S19"/>
    <property type="match status" value="1"/>
</dbReference>
<dbReference type="PROSITE" id="PS00323">
    <property type="entry name" value="RIBOSOMAL_S19"/>
    <property type="match status" value="1"/>
</dbReference>
<accession>C0ZW29</accession>
<protein>
    <recommendedName>
        <fullName evidence="1">Small ribosomal subunit protein uS19</fullName>
    </recommendedName>
    <alternativeName>
        <fullName evidence="2">30S ribosomal protein S19</fullName>
    </alternativeName>
</protein>
<name>RS19_RHOE4</name>
<evidence type="ECO:0000255" key="1">
    <source>
        <dbReference type="HAMAP-Rule" id="MF_00531"/>
    </source>
</evidence>
<evidence type="ECO:0000305" key="2"/>